<accession>Q5HRX4</accession>
<proteinExistence type="inferred from homology"/>
<organism>
    <name type="scientific">Staphylococcus epidermidis (strain ATCC 35984 / DSM 28319 / BCRC 17069 / CCUG 31568 / BM 3577 / RP62A)</name>
    <dbReference type="NCBI Taxonomy" id="176279"/>
    <lineage>
        <taxon>Bacteria</taxon>
        <taxon>Bacillati</taxon>
        <taxon>Bacillota</taxon>
        <taxon>Bacilli</taxon>
        <taxon>Bacillales</taxon>
        <taxon>Staphylococcaceae</taxon>
        <taxon>Staphylococcus</taxon>
    </lineage>
</organism>
<feature type="chain" id="PRO_0000339756" description="Xanthine phosphoribosyltransferase">
    <location>
        <begin position="1"/>
        <end position="192"/>
    </location>
</feature>
<feature type="binding site" evidence="1">
    <location>
        <position position="20"/>
    </location>
    <ligand>
        <name>xanthine</name>
        <dbReference type="ChEBI" id="CHEBI:17712"/>
    </ligand>
</feature>
<feature type="binding site" evidence="1">
    <location>
        <position position="27"/>
    </location>
    <ligand>
        <name>xanthine</name>
        <dbReference type="ChEBI" id="CHEBI:17712"/>
    </ligand>
</feature>
<feature type="binding site" evidence="1">
    <location>
        <begin position="128"/>
        <end position="132"/>
    </location>
    <ligand>
        <name>5-phospho-alpha-D-ribose 1-diphosphate</name>
        <dbReference type="ChEBI" id="CHEBI:58017"/>
    </ligand>
</feature>
<feature type="binding site" evidence="1">
    <location>
        <position position="156"/>
    </location>
    <ligand>
        <name>xanthine</name>
        <dbReference type="ChEBI" id="CHEBI:17712"/>
    </ligand>
</feature>
<reference key="1">
    <citation type="journal article" date="2005" name="J. Bacteriol.">
        <title>Insights on evolution of virulence and resistance from the complete genome analysis of an early methicillin-resistant Staphylococcus aureus strain and a biofilm-producing methicillin-resistant Staphylococcus epidermidis strain.</title>
        <authorList>
            <person name="Gill S.R."/>
            <person name="Fouts D.E."/>
            <person name="Archer G.L."/>
            <person name="Mongodin E.F."/>
            <person name="DeBoy R.T."/>
            <person name="Ravel J."/>
            <person name="Paulsen I.T."/>
            <person name="Kolonay J.F."/>
            <person name="Brinkac L.M."/>
            <person name="Beanan M.J."/>
            <person name="Dodson R.J."/>
            <person name="Daugherty S.C."/>
            <person name="Madupu R."/>
            <person name="Angiuoli S.V."/>
            <person name="Durkin A.S."/>
            <person name="Haft D.H."/>
            <person name="Vamathevan J.J."/>
            <person name="Khouri H."/>
            <person name="Utterback T.R."/>
            <person name="Lee C."/>
            <person name="Dimitrov G."/>
            <person name="Jiang L."/>
            <person name="Qin H."/>
            <person name="Weidman J."/>
            <person name="Tran K."/>
            <person name="Kang K.H."/>
            <person name="Hance I.R."/>
            <person name="Nelson K.E."/>
            <person name="Fraser C.M."/>
        </authorList>
    </citation>
    <scope>NUCLEOTIDE SEQUENCE [LARGE SCALE GENOMIC DNA]</scope>
    <source>
        <strain>ATCC 35984 / DSM 28319 / BCRC 17069 / CCUG 31568 / BM 3577 / RP62A</strain>
    </source>
</reference>
<name>XPT_STAEQ</name>
<keyword id="KW-0963">Cytoplasm</keyword>
<keyword id="KW-0328">Glycosyltransferase</keyword>
<keyword id="KW-0660">Purine salvage</keyword>
<keyword id="KW-1185">Reference proteome</keyword>
<keyword id="KW-0808">Transferase</keyword>
<evidence type="ECO:0000255" key="1">
    <source>
        <dbReference type="HAMAP-Rule" id="MF_01184"/>
    </source>
</evidence>
<comment type="function">
    <text evidence="1">Converts the preformed base xanthine, a product of nucleic acid breakdown, to xanthosine 5'-monophosphate (XMP), so it can be reused for RNA or DNA synthesis.</text>
</comment>
<comment type="catalytic activity">
    <reaction evidence="1">
        <text>XMP + diphosphate = xanthine + 5-phospho-alpha-D-ribose 1-diphosphate</text>
        <dbReference type="Rhea" id="RHEA:10800"/>
        <dbReference type="ChEBI" id="CHEBI:17712"/>
        <dbReference type="ChEBI" id="CHEBI:33019"/>
        <dbReference type="ChEBI" id="CHEBI:57464"/>
        <dbReference type="ChEBI" id="CHEBI:58017"/>
        <dbReference type="EC" id="2.4.2.22"/>
    </reaction>
</comment>
<comment type="pathway">
    <text evidence="1">Purine metabolism; XMP biosynthesis via salvage pathway; XMP from xanthine: step 1/1.</text>
</comment>
<comment type="subunit">
    <text evidence="1">Homodimer.</text>
</comment>
<comment type="subcellular location">
    <subcellularLocation>
        <location evidence="1">Cytoplasm</location>
    </subcellularLocation>
</comment>
<comment type="similarity">
    <text evidence="1">Belongs to the purine/pyrimidine phosphoribosyltransferase family. Xpt subfamily.</text>
</comment>
<sequence length="192" mass="20707">MESLGRKVKEDGVVIDEKILKVDGFLNHQIDAKLMNDVGKTFYESFKDAGITKILTIEASGIAPAIMASFHFDVPCLFAKKAKPSTLKDGFYSTDIHSFTKNKTSTVIVSEEFLGADDKVLIIDDFLANGDASLGLNDIVKQANATTVGVGIVVEKSFQNGRQRLEDAGLYVSSLCKVASLKGNKVTLLGEA</sequence>
<gene>
    <name evidence="1" type="primary">xpt</name>
    <name type="ordered locus">SERP0067</name>
</gene>
<dbReference type="EC" id="2.4.2.22" evidence="1"/>
<dbReference type="EMBL" id="CP000029">
    <property type="protein sequence ID" value="AAW53466.1"/>
    <property type="molecule type" value="Genomic_DNA"/>
</dbReference>
<dbReference type="RefSeq" id="WP_001829410.1">
    <property type="nucleotide sequence ID" value="NC_002976.3"/>
</dbReference>
<dbReference type="SMR" id="Q5HRX4"/>
<dbReference type="STRING" id="176279.SERP0067"/>
<dbReference type="GeneID" id="50019661"/>
<dbReference type="KEGG" id="ser:SERP0067"/>
<dbReference type="eggNOG" id="COG0503">
    <property type="taxonomic scope" value="Bacteria"/>
</dbReference>
<dbReference type="HOGENOM" id="CLU_099015_0_0_9"/>
<dbReference type="UniPathway" id="UPA00602">
    <property type="reaction ID" value="UER00658"/>
</dbReference>
<dbReference type="Proteomes" id="UP000000531">
    <property type="component" value="Chromosome"/>
</dbReference>
<dbReference type="GO" id="GO:0005737">
    <property type="term" value="C:cytoplasm"/>
    <property type="evidence" value="ECO:0007669"/>
    <property type="project" value="UniProtKB-SubCell"/>
</dbReference>
<dbReference type="GO" id="GO:0000310">
    <property type="term" value="F:xanthine phosphoribosyltransferase activity"/>
    <property type="evidence" value="ECO:0007669"/>
    <property type="project" value="UniProtKB-UniRule"/>
</dbReference>
<dbReference type="GO" id="GO:0006166">
    <property type="term" value="P:purine ribonucleoside salvage"/>
    <property type="evidence" value="ECO:0007669"/>
    <property type="project" value="UniProtKB-KW"/>
</dbReference>
<dbReference type="GO" id="GO:0046110">
    <property type="term" value="P:xanthine metabolic process"/>
    <property type="evidence" value="ECO:0007669"/>
    <property type="project" value="InterPro"/>
</dbReference>
<dbReference type="GO" id="GO:0032265">
    <property type="term" value="P:XMP salvage"/>
    <property type="evidence" value="ECO:0007669"/>
    <property type="project" value="UniProtKB-UniRule"/>
</dbReference>
<dbReference type="CDD" id="cd06223">
    <property type="entry name" value="PRTases_typeI"/>
    <property type="match status" value="1"/>
</dbReference>
<dbReference type="Gene3D" id="3.40.50.2020">
    <property type="match status" value="1"/>
</dbReference>
<dbReference type="HAMAP" id="MF_01184">
    <property type="entry name" value="XPRTase"/>
    <property type="match status" value="1"/>
</dbReference>
<dbReference type="InterPro" id="IPR000836">
    <property type="entry name" value="PRibTrfase_dom"/>
</dbReference>
<dbReference type="InterPro" id="IPR029057">
    <property type="entry name" value="PRTase-like"/>
</dbReference>
<dbReference type="InterPro" id="IPR050118">
    <property type="entry name" value="Pur/Pyrimidine_PRTase"/>
</dbReference>
<dbReference type="InterPro" id="IPR010079">
    <property type="entry name" value="Xanthine_PRibTrfase"/>
</dbReference>
<dbReference type="NCBIfam" id="NF006671">
    <property type="entry name" value="PRK09219.1"/>
    <property type="match status" value="1"/>
</dbReference>
<dbReference type="NCBIfam" id="TIGR01744">
    <property type="entry name" value="XPRTase"/>
    <property type="match status" value="1"/>
</dbReference>
<dbReference type="PANTHER" id="PTHR43864">
    <property type="entry name" value="HYPOXANTHINE/GUANINE PHOSPHORIBOSYLTRANSFERASE"/>
    <property type="match status" value="1"/>
</dbReference>
<dbReference type="PANTHER" id="PTHR43864:SF1">
    <property type="entry name" value="XANTHINE PHOSPHORIBOSYLTRANSFERASE"/>
    <property type="match status" value="1"/>
</dbReference>
<dbReference type="SUPFAM" id="SSF53271">
    <property type="entry name" value="PRTase-like"/>
    <property type="match status" value="1"/>
</dbReference>
<protein>
    <recommendedName>
        <fullName evidence="1">Xanthine phosphoribosyltransferase</fullName>
        <shortName evidence="1">XPRTase</shortName>
        <ecNumber evidence="1">2.4.2.22</ecNumber>
    </recommendedName>
</protein>